<keyword id="KW-0119">Carbohydrate metabolism</keyword>
<keyword id="KW-0313">Glucose metabolism</keyword>
<keyword id="KW-0413">Isomerase</keyword>
<keyword id="KW-0460">Magnesium</keyword>
<keyword id="KW-0479">Metal-binding</keyword>
<keyword id="KW-0597">Phosphoprotein</keyword>
<keyword id="KW-1185">Reference proteome</keyword>
<gene>
    <name type="primary">pgcA</name>
    <name type="ordered locus">SERP2055</name>
</gene>
<proteinExistence type="inferred from homology"/>
<comment type="function">
    <text evidence="1">Catalyzes the interconversion between glucose-6-phosphate and alpha-glucose-1-phosphate. This is the first step in the biosynthesis of diglucosyl-diacylglycerol (Glc2-DAG), i.e. a glycolipid found in the membrane, which is also used as a membrane anchor for lipoteichoic acid (LTA) (By similarity).</text>
</comment>
<comment type="catalytic activity">
    <reaction>
        <text>alpha-D-glucose 1-phosphate = alpha-D-glucose 6-phosphate</text>
        <dbReference type="Rhea" id="RHEA:23536"/>
        <dbReference type="ChEBI" id="CHEBI:58225"/>
        <dbReference type="ChEBI" id="CHEBI:58601"/>
        <dbReference type="EC" id="5.4.2.2"/>
    </reaction>
</comment>
<comment type="cofactor">
    <cofactor evidence="1">
        <name>Mg(2+)</name>
        <dbReference type="ChEBI" id="CHEBI:18420"/>
    </cofactor>
    <text evidence="1">Binds 1 Mg(2+) ion per subunit.</text>
</comment>
<comment type="pathway">
    <text>Glycolipid metabolism; diglucosyl-diacylglycerol biosynthesis.</text>
</comment>
<comment type="similarity">
    <text evidence="2">Belongs to the phosphohexose mutase family.</text>
</comment>
<dbReference type="EC" id="5.4.2.2"/>
<dbReference type="EMBL" id="CP000029">
    <property type="protein sequence ID" value="AAW52902.1"/>
    <property type="molecule type" value="Genomic_DNA"/>
</dbReference>
<dbReference type="RefSeq" id="WP_002501834.1">
    <property type="nucleotide sequence ID" value="NC_002976.3"/>
</dbReference>
<dbReference type="SMR" id="Q5HLD2"/>
<dbReference type="STRING" id="176279.SERP2055"/>
<dbReference type="KEGG" id="ser:SERP2055"/>
<dbReference type="eggNOG" id="COG1109">
    <property type="taxonomic scope" value="Bacteria"/>
</dbReference>
<dbReference type="HOGENOM" id="CLU_016950_0_0_9"/>
<dbReference type="UniPathway" id="UPA00894"/>
<dbReference type="Proteomes" id="UP000000531">
    <property type="component" value="Chromosome"/>
</dbReference>
<dbReference type="GO" id="GO:0000287">
    <property type="term" value="F:magnesium ion binding"/>
    <property type="evidence" value="ECO:0007669"/>
    <property type="project" value="InterPro"/>
</dbReference>
<dbReference type="GO" id="GO:0004614">
    <property type="term" value="F:phosphoglucomutase activity"/>
    <property type="evidence" value="ECO:0007669"/>
    <property type="project" value="UniProtKB-EC"/>
</dbReference>
<dbReference type="GO" id="GO:0008973">
    <property type="term" value="F:phosphopentomutase activity"/>
    <property type="evidence" value="ECO:0007669"/>
    <property type="project" value="TreeGrafter"/>
</dbReference>
<dbReference type="GO" id="GO:0009246">
    <property type="term" value="P:enterobacterial common antigen biosynthetic process"/>
    <property type="evidence" value="ECO:0007669"/>
    <property type="project" value="UniProtKB-UniPathway"/>
</dbReference>
<dbReference type="GO" id="GO:0006006">
    <property type="term" value="P:glucose metabolic process"/>
    <property type="evidence" value="ECO:0007669"/>
    <property type="project" value="UniProtKB-KW"/>
</dbReference>
<dbReference type="GO" id="GO:0006166">
    <property type="term" value="P:purine ribonucleoside salvage"/>
    <property type="evidence" value="ECO:0007669"/>
    <property type="project" value="TreeGrafter"/>
</dbReference>
<dbReference type="CDD" id="cd05799">
    <property type="entry name" value="PGM2"/>
    <property type="match status" value="1"/>
</dbReference>
<dbReference type="Gene3D" id="3.40.120.10">
    <property type="entry name" value="Alpha-D-Glucose-1,6-Bisphosphate, subunit A, domain 3"/>
    <property type="match status" value="3"/>
</dbReference>
<dbReference type="Gene3D" id="3.30.310.50">
    <property type="entry name" value="Alpha-D-phosphohexomutase, C-terminal domain"/>
    <property type="match status" value="1"/>
</dbReference>
<dbReference type="InterPro" id="IPR005844">
    <property type="entry name" value="A-D-PHexomutase_a/b/a-I"/>
</dbReference>
<dbReference type="InterPro" id="IPR016055">
    <property type="entry name" value="A-D-PHexomutase_a/b/a-I/II/III"/>
</dbReference>
<dbReference type="InterPro" id="IPR005845">
    <property type="entry name" value="A-D-PHexomutase_a/b/a-II"/>
</dbReference>
<dbReference type="InterPro" id="IPR005846">
    <property type="entry name" value="A-D-PHexomutase_a/b/a-III"/>
</dbReference>
<dbReference type="InterPro" id="IPR005843">
    <property type="entry name" value="A-D-PHexomutase_C"/>
</dbReference>
<dbReference type="InterPro" id="IPR036900">
    <property type="entry name" value="A-D-PHexomutase_C_sf"/>
</dbReference>
<dbReference type="InterPro" id="IPR016066">
    <property type="entry name" value="A-D-PHexomutase_CS"/>
</dbReference>
<dbReference type="InterPro" id="IPR005841">
    <property type="entry name" value="Alpha-D-phosphohexomutase_SF"/>
</dbReference>
<dbReference type="PANTHER" id="PTHR45745:SF1">
    <property type="entry name" value="PHOSPHOGLUCOMUTASE 2B-RELATED"/>
    <property type="match status" value="1"/>
</dbReference>
<dbReference type="PANTHER" id="PTHR45745">
    <property type="entry name" value="PHOSPHOMANNOMUTASE 45A"/>
    <property type="match status" value="1"/>
</dbReference>
<dbReference type="Pfam" id="PF02878">
    <property type="entry name" value="PGM_PMM_I"/>
    <property type="match status" value="1"/>
</dbReference>
<dbReference type="Pfam" id="PF02879">
    <property type="entry name" value="PGM_PMM_II"/>
    <property type="match status" value="1"/>
</dbReference>
<dbReference type="Pfam" id="PF02880">
    <property type="entry name" value="PGM_PMM_III"/>
    <property type="match status" value="1"/>
</dbReference>
<dbReference type="Pfam" id="PF00408">
    <property type="entry name" value="PGM_PMM_IV"/>
    <property type="match status" value="1"/>
</dbReference>
<dbReference type="PRINTS" id="PR00509">
    <property type="entry name" value="PGMPMM"/>
</dbReference>
<dbReference type="SUPFAM" id="SSF55957">
    <property type="entry name" value="Phosphoglucomutase, C-terminal domain"/>
    <property type="match status" value="1"/>
</dbReference>
<dbReference type="SUPFAM" id="SSF53738">
    <property type="entry name" value="Phosphoglucomutase, first 3 domains"/>
    <property type="match status" value="3"/>
</dbReference>
<dbReference type="PROSITE" id="PS00710">
    <property type="entry name" value="PGM_PMM"/>
    <property type="match status" value="1"/>
</dbReference>
<sequence length="546" mass="60851">MKNNWIDVLDESLVKDFYNNQTSEEQQEGLNTTLSFGTAGIRGKFGLGEGRLNKFTVSKVALGFAHYLTSSIAHPVVVIHYDTRHLSPEFAQIIANILASHDIKVYLADTYRTTPDLSFAVRYLQADAGVMITASHNPKDYNGIKVYGEDGAQLSTDASAQLSTYIDKLGHPLHINVPSLTTEQQSLIHSVPSEVREDYFKNVQDLVGTIPQSDLKVVFTSLHGTSVPIVPDILSSLNFNQFELVASQCEPDSDFSSVASANPEDHKAFDQSIELANLIDADLLIGTDPDADRLGIVERDAEGNIYYYNGNQIGALLLNYRIKQTEGLPNRIMFQSIVSGGLAKSLAQYHNVNFKEVLTGFKYIAAEIRHLSPEQNFIFGYEESYGFLARPFVRDKDAIQIVPLMIKYAAELKNEGRMLKDELEDITRNVGNFNDKLFSHTFEGTQGKAKIENIMTQFRSETPTEMCGLKVIAIEDFETGKKTDLQNDEVSDITLPKANVIKIYFNEGFIALRPSGTEPKIKLYVSLSCDHFDVIAQKINDAIFNS</sequence>
<feature type="chain" id="PRO_0000308345" description="Phosphoglucomutase">
    <location>
        <begin position="1"/>
        <end position="546"/>
    </location>
</feature>
<feature type="active site" description="Phosphoserine intermediate" evidence="1">
    <location>
        <position position="135"/>
    </location>
</feature>
<feature type="binding site" description="via phosphate group" evidence="1">
    <location>
        <position position="135"/>
    </location>
    <ligand>
        <name>Mg(2+)</name>
        <dbReference type="ChEBI" id="CHEBI:18420"/>
    </ligand>
</feature>
<feature type="binding site" evidence="1">
    <location>
        <position position="288"/>
    </location>
    <ligand>
        <name>Mg(2+)</name>
        <dbReference type="ChEBI" id="CHEBI:18420"/>
    </ligand>
</feature>
<feature type="binding site" evidence="1">
    <location>
        <position position="290"/>
    </location>
    <ligand>
        <name>Mg(2+)</name>
        <dbReference type="ChEBI" id="CHEBI:18420"/>
    </ligand>
</feature>
<feature type="binding site" evidence="1">
    <location>
        <position position="292"/>
    </location>
    <ligand>
        <name>Mg(2+)</name>
        <dbReference type="ChEBI" id="CHEBI:18420"/>
    </ligand>
</feature>
<protein>
    <recommendedName>
        <fullName>Phosphoglucomutase</fullName>
        <shortName>PGM</shortName>
        <ecNumber>5.4.2.2</ecNumber>
    </recommendedName>
    <alternativeName>
        <fullName>Alpha-phosphoglucomutase</fullName>
    </alternativeName>
    <alternativeName>
        <fullName>Glucose phosphomutase</fullName>
    </alternativeName>
</protein>
<reference key="1">
    <citation type="journal article" date="2005" name="J. Bacteriol.">
        <title>Insights on evolution of virulence and resistance from the complete genome analysis of an early methicillin-resistant Staphylococcus aureus strain and a biofilm-producing methicillin-resistant Staphylococcus epidermidis strain.</title>
        <authorList>
            <person name="Gill S.R."/>
            <person name="Fouts D.E."/>
            <person name="Archer G.L."/>
            <person name="Mongodin E.F."/>
            <person name="DeBoy R.T."/>
            <person name="Ravel J."/>
            <person name="Paulsen I.T."/>
            <person name="Kolonay J.F."/>
            <person name="Brinkac L.M."/>
            <person name="Beanan M.J."/>
            <person name="Dodson R.J."/>
            <person name="Daugherty S.C."/>
            <person name="Madupu R."/>
            <person name="Angiuoli S.V."/>
            <person name="Durkin A.S."/>
            <person name="Haft D.H."/>
            <person name="Vamathevan J.J."/>
            <person name="Khouri H."/>
            <person name="Utterback T.R."/>
            <person name="Lee C."/>
            <person name="Dimitrov G."/>
            <person name="Jiang L."/>
            <person name="Qin H."/>
            <person name="Weidman J."/>
            <person name="Tran K."/>
            <person name="Kang K.H."/>
            <person name="Hance I.R."/>
            <person name="Nelson K.E."/>
            <person name="Fraser C.M."/>
        </authorList>
    </citation>
    <scope>NUCLEOTIDE SEQUENCE [LARGE SCALE GENOMIC DNA]</scope>
    <source>
        <strain>ATCC 35984 / DSM 28319 / BCRC 17069 / CCUG 31568 / BM 3577 / RP62A</strain>
    </source>
</reference>
<evidence type="ECO:0000250" key="1"/>
<evidence type="ECO:0000305" key="2"/>
<accession>Q5HLD2</accession>
<name>PGCA_STAEQ</name>
<organism>
    <name type="scientific">Staphylococcus epidermidis (strain ATCC 35984 / DSM 28319 / BCRC 17069 / CCUG 31568 / BM 3577 / RP62A)</name>
    <dbReference type="NCBI Taxonomy" id="176279"/>
    <lineage>
        <taxon>Bacteria</taxon>
        <taxon>Bacillati</taxon>
        <taxon>Bacillota</taxon>
        <taxon>Bacilli</taxon>
        <taxon>Bacillales</taxon>
        <taxon>Staphylococcaceae</taxon>
        <taxon>Staphylococcus</taxon>
    </lineage>
</organism>